<reference key="1">
    <citation type="journal article" date="2008" name="Genome Res.">
        <title>Chlamydia trachomatis: genome sequence analysis of lymphogranuloma venereum isolates.</title>
        <authorList>
            <person name="Thomson N.R."/>
            <person name="Holden M.T.G."/>
            <person name="Carder C."/>
            <person name="Lennard N."/>
            <person name="Lockey S.J."/>
            <person name="Marsh P."/>
            <person name="Skipp P."/>
            <person name="O'Connor C.D."/>
            <person name="Goodhead I."/>
            <person name="Norbertzcak H."/>
            <person name="Harris B."/>
            <person name="Ormond D."/>
            <person name="Rance R."/>
            <person name="Quail M.A."/>
            <person name="Parkhill J."/>
            <person name="Stephens R.S."/>
            <person name="Clarke I.N."/>
        </authorList>
    </citation>
    <scope>NUCLEOTIDE SEQUENCE [LARGE SCALE GENOMIC DNA]</scope>
    <source>
        <strain>UCH-1/proctitis</strain>
    </source>
</reference>
<name>KTHY_CHLTB</name>
<protein>
    <recommendedName>
        <fullName evidence="1">Thymidylate kinase</fullName>
        <ecNumber evidence="1">2.7.4.9</ecNumber>
    </recommendedName>
    <alternativeName>
        <fullName evidence="1">dTMP kinase</fullName>
    </alternativeName>
</protein>
<gene>
    <name evidence="1" type="primary">tmk</name>
    <name type="ordered locus">CTLon_0435</name>
</gene>
<comment type="function">
    <text evidence="1">Phosphorylation of dTMP to form dTDP in both de novo and salvage pathways of dTTP synthesis.</text>
</comment>
<comment type="catalytic activity">
    <reaction evidence="1">
        <text>dTMP + ATP = dTDP + ADP</text>
        <dbReference type="Rhea" id="RHEA:13517"/>
        <dbReference type="ChEBI" id="CHEBI:30616"/>
        <dbReference type="ChEBI" id="CHEBI:58369"/>
        <dbReference type="ChEBI" id="CHEBI:63528"/>
        <dbReference type="ChEBI" id="CHEBI:456216"/>
        <dbReference type="EC" id="2.7.4.9"/>
    </reaction>
</comment>
<comment type="similarity">
    <text evidence="1">Belongs to the thymidylate kinase family.</text>
</comment>
<proteinExistence type="inferred from homology"/>
<sequence>MFIVVEGGEGAGKTQFIQALSKRLIEEGREIVTTREPGGCSLGDSVRGLLLDPEQKISPYAELLLFLAARAQHIQEKIIPALKSGKTVISDRFHDSTIVYQGIAGGLGESFVTNLCYHVVGDKPFLPDIIFLLDIPAREGLLRKARQKHLDKFEQKPQIFHQSVREGFLALAEKAPDRYKVLDALLPTEASVDQALLQIRALI</sequence>
<organism>
    <name type="scientific">Chlamydia trachomatis serovar L2b (strain UCH-1/proctitis)</name>
    <dbReference type="NCBI Taxonomy" id="471473"/>
    <lineage>
        <taxon>Bacteria</taxon>
        <taxon>Pseudomonadati</taxon>
        <taxon>Chlamydiota</taxon>
        <taxon>Chlamydiia</taxon>
        <taxon>Chlamydiales</taxon>
        <taxon>Chlamydiaceae</taxon>
        <taxon>Chlamydia/Chlamydophila group</taxon>
        <taxon>Chlamydia</taxon>
    </lineage>
</organism>
<dbReference type="EC" id="2.7.4.9" evidence="1"/>
<dbReference type="EMBL" id="AM884177">
    <property type="protein sequence ID" value="CAP06833.1"/>
    <property type="molecule type" value="Genomic_DNA"/>
</dbReference>
<dbReference type="RefSeq" id="WP_009873625.1">
    <property type="nucleotide sequence ID" value="NC_010280.2"/>
</dbReference>
<dbReference type="SMR" id="B0BBG8"/>
<dbReference type="KEGG" id="ctl:CTLon_0435"/>
<dbReference type="HOGENOM" id="CLU_049131_0_2_0"/>
<dbReference type="Proteomes" id="UP001154401">
    <property type="component" value="Chromosome"/>
</dbReference>
<dbReference type="GO" id="GO:0005829">
    <property type="term" value="C:cytosol"/>
    <property type="evidence" value="ECO:0007669"/>
    <property type="project" value="TreeGrafter"/>
</dbReference>
<dbReference type="GO" id="GO:0005524">
    <property type="term" value="F:ATP binding"/>
    <property type="evidence" value="ECO:0007669"/>
    <property type="project" value="UniProtKB-UniRule"/>
</dbReference>
<dbReference type="GO" id="GO:0004798">
    <property type="term" value="F:dTMP kinase activity"/>
    <property type="evidence" value="ECO:0007669"/>
    <property type="project" value="UniProtKB-UniRule"/>
</dbReference>
<dbReference type="GO" id="GO:0006233">
    <property type="term" value="P:dTDP biosynthetic process"/>
    <property type="evidence" value="ECO:0007669"/>
    <property type="project" value="InterPro"/>
</dbReference>
<dbReference type="GO" id="GO:0006235">
    <property type="term" value="P:dTTP biosynthetic process"/>
    <property type="evidence" value="ECO:0007669"/>
    <property type="project" value="UniProtKB-UniRule"/>
</dbReference>
<dbReference type="GO" id="GO:0006227">
    <property type="term" value="P:dUDP biosynthetic process"/>
    <property type="evidence" value="ECO:0007669"/>
    <property type="project" value="TreeGrafter"/>
</dbReference>
<dbReference type="CDD" id="cd01672">
    <property type="entry name" value="TMPK"/>
    <property type="match status" value="1"/>
</dbReference>
<dbReference type="FunFam" id="3.40.50.300:FF:000225">
    <property type="entry name" value="Thymidylate kinase"/>
    <property type="match status" value="1"/>
</dbReference>
<dbReference type="Gene3D" id="3.40.50.300">
    <property type="entry name" value="P-loop containing nucleotide triphosphate hydrolases"/>
    <property type="match status" value="1"/>
</dbReference>
<dbReference type="HAMAP" id="MF_00165">
    <property type="entry name" value="Thymidylate_kinase"/>
    <property type="match status" value="1"/>
</dbReference>
<dbReference type="InterPro" id="IPR027417">
    <property type="entry name" value="P-loop_NTPase"/>
</dbReference>
<dbReference type="InterPro" id="IPR039430">
    <property type="entry name" value="Thymidylate_kin-like_dom"/>
</dbReference>
<dbReference type="InterPro" id="IPR018095">
    <property type="entry name" value="Thymidylate_kin_CS"/>
</dbReference>
<dbReference type="InterPro" id="IPR018094">
    <property type="entry name" value="Thymidylate_kinase"/>
</dbReference>
<dbReference type="NCBIfam" id="TIGR00041">
    <property type="entry name" value="DTMP_kinase"/>
    <property type="match status" value="1"/>
</dbReference>
<dbReference type="PANTHER" id="PTHR10344">
    <property type="entry name" value="THYMIDYLATE KINASE"/>
    <property type="match status" value="1"/>
</dbReference>
<dbReference type="PANTHER" id="PTHR10344:SF4">
    <property type="entry name" value="UMP-CMP KINASE 2, MITOCHONDRIAL"/>
    <property type="match status" value="1"/>
</dbReference>
<dbReference type="Pfam" id="PF02223">
    <property type="entry name" value="Thymidylate_kin"/>
    <property type="match status" value="1"/>
</dbReference>
<dbReference type="SUPFAM" id="SSF52540">
    <property type="entry name" value="P-loop containing nucleoside triphosphate hydrolases"/>
    <property type="match status" value="1"/>
</dbReference>
<dbReference type="PROSITE" id="PS01331">
    <property type="entry name" value="THYMIDYLATE_KINASE"/>
    <property type="match status" value="1"/>
</dbReference>
<accession>B0BBG8</accession>
<feature type="chain" id="PRO_1000097387" description="Thymidylate kinase">
    <location>
        <begin position="1"/>
        <end position="203"/>
    </location>
</feature>
<feature type="binding site" evidence="1">
    <location>
        <begin position="7"/>
        <end position="14"/>
    </location>
    <ligand>
        <name>ATP</name>
        <dbReference type="ChEBI" id="CHEBI:30616"/>
    </ligand>
</feature>
<keyword id="KW-0067">ATP-binding</keyword>
<keyword id="KW-0418">Kinase</keyword>
<keyword id="KW-0545">Nucleotide biosynthesis</keyword>
<keyword id="KW-0547">Nucleotide-binding</keyword>
<keyword id="KW-0808">Transferase</keyword>
<evidence type="ECO:0000255" key="1">
    <source>
        <dbReference type="HAMAP-Rule" id="MF_00165"/>
    </source>
</evidence>